<organism>
    <name type="scientific">Rattus norvegicus</name>
    <name type="common">Rat</name>
    <dbReference type="NCBI Taxonomy" id="10116"/>
    <lineage>
        <taxon>Eukaryota</taxon>
        <taxon>Metazoa</taxon>
        <taxon>Chordata</taxon>
        <taxon>Craniata</taxon>
        <taxon>Vertebrata</taxon>
        <taxon>Euteleostomi</taxon>
        <taxon>Mammalia</taxon>
        <taxon>Eutheria</taxon>
        <taxon>Euarchontoglires</taxon>
        <taxon>Glires</taxon>
        <taxon>Rodentia</taxon>
        <taxon>Myomorpha</taxon>
        <taxon>Muroidea</taxon>
        <taxon>Muridae</taxon>
        <taxon>Murinae</taxon>
        <taxon>Rattus</taxon>
    </lineage>
</organism>
<accession>O88944</accession>
<accession>Q9Z240</accession>
<dbReference type="EMBL" id="AF087454">
    <property type="protein sequence ID" value="AAC36723.2"/>
    <property type="molecule type" value="mRNA"/>
</dbReference>
<dbReference type="EMBL" id="AF091247">
    <property type="protein sequence ID" value="AAC79846.1"/>
    <property type="molecule type" value="mRNA"/>
</dbReference>
<dbReference type="RefSeq" id="NP_113785.3">
    <molecule id="O88944-1"/>
    <property type="nucleotide sequence ID" value="NM_031597.4"/>
</dbReference>
<dbReference type="SMR" id="O88944"/>
<dbReference type="CORUM" id="O88944"/>
<dbReference type="FunCoup" id="O88944">
    <property type="interactions" value="1085"/>
</dbReference>
<dbReference type="STRING" id="10116.ENSRNOP00000065354"/>
<dbReference type="BindingDB" id="O88944"/>
<dbReference type="ChEMBL" id="CHEMBL5531"/>
<dbReference type="DrugCentral" id="O88944"/>
<dbReference type="GuidetoPHARMACOLOGY" id="562"/>
<dbReference type="iPTMnet" id="O88944"/>
<dbReference type="PhosphoSitePlus" id="O88944"/>
<dbReference type="PaxDb" id="10116-ENSRNOP00000065354"/>
<dbReference type="Ensembl" id="ENSRNOT00000109659.1">
    <molecule id="O88944-1"/>
    <property type="protein sequence ID" value="ENSRNOP00000093985.1"/>
    <property type="gene ID" value="ENSRNOG00000005206.8"/>
</dbReference>
<dbReference type="GeneID" id="29682"/>
<dbReference type="KEGG" id="rno:29682"/>
<dbReference type="UCSC" id="RGD:69222">
    <molecule id="O88944-1"/>
    <property type="organism name" value="rat"/>
</dbReference>
<dbReference type="AGR" id="RGD:69222"/>
<dbReference type="CTD" id="3786"/>
<dbReference type="RGD" id="69222">
    <property type="gene designation" value="Kcnq3"/>
</dbReference>
<dbReference type="eggNOG" id="KOG1419">
    <property type="taxonomic scope" value="Eukaryota"/>
</dbReference>
<dbReference type="GeneTree" id="ENSGT00940000159760"/>
<dbReference type="InParanoid" id="O88944"/>
<dbReference type="OMA" id="QDRDDYM"/>
<dbReference type="PhylomeDB" id="O88944"/>
<dbReference type="PRO" id="PR:O88944"/>
<dbReference type="Proteomes" id="UP000002494">
    <property type="component" value="Chromosome 7"/>
</dbReference>
<dbReference type="GO" id="GO:0043194">
    <property type="term" value="C:axon initial segment"/>
    <property type="evidence" value="ECO:0000314"/>
    <property type="project" value="RGD"/>
</dbReference>
<dbReference type="GO" id="GO:0009986">
    <property type="term" value="C:cell surface"/>
    <property type="evidence" value="ECO:0000314"/>
    <property type="project" value="RGD"/>
</dbReference>
<dbReference type="GO" id="GO:0030425">
    <property type="term" value="C:dendrite"/>
    <property type="evidence" value="ECO:0000314"/>
    <property type="project" value="RGD"/>
</dbReference>
<dbReference type="GO" id="GO:0016020">
    <property type="term" value="C:membrane"/>
    <property type="evidence" value="ECO:0000318"/>
    <property type="project" value="GO_Central"/>
</dbReference>
<dbReference type="GO" id="GO:0005739">
    <property type="term" value="C:mitochondrion"/>
    <property type="evidence" value="ECO:0007669"/>
    <property type="project" value="GOC"/>
</dbReference>
<dbReference type="GO" id="GO:0043025">
    <property type="term" value="C:neuronal cell body"/>
    <property type="evidence" value="ECO:0000314"/>
    <property type="project" value="RGD"/>
</dbReference>
<dbReference type="GO" id="GO:0033268">
    <property type="term" value="C:node of Ranvier"/>
    <property type="evidence" value="ECO:0000266"/>
    <property type="project" value="RGD"/>
</dbReference>
<dbReference type="GO" id="GO:0005886">
    <property type="term" value="C:plasma membrane"/>
    <property type="evidence" value="ECO:0000314"/>
    <property type="project" value="UniProtKB"/>
</dbReference>
<dbReference type="GO" id="GO:0036477">
    <property type="term" value="C:somatodendritic compartment"/>
    <property type="evidence" value="ECO:0000314"/>
    <property type="project" value="RGD"/>
</dbReference>
<dbReference type="GO" id="GO:0045202">
    <property type="term" value="C:synapse"/>
    <property type="evidence" value="ECO:0007669"/>
    <property type="project" value="GOC"/>
</dbReference>
<dbReference type="GO" id="GO:0008076">
    <property type="term" value="C:voltage-gated potassium channel complex"/>
    <property type="evidence" value="ECO:0000314"/>
    <property type="project" value="UniProtKB"/>
</dbReference>
<dbReference type="GO" id="GO:0005516">
    <property type="term" value="F:calmodulin binding"/>
    <property type="evidence" value="ECO:0000314"/>
    <property type="project" value="RGD"/>
</dbReference>
<dbReference type="GO" id="GO:0005267">
    <property type="term" value="F:potassium channel activity"/>
    <property type="evidence" value="ECO:0000266"/>
    <property type="project" value="RGD"/>
</dbReference>
<dbReference type="GO" id="GO:0019901">
    <property type="term" value="F:protein kinase binding"/>
    <property type="evidence" value="ECO:0000353"/>
    <property type="project" value="RGD"/>
</dbReference>
<dbReference type="GO" id="GO:0044325">
    <property type="term" value="F:transmembrane transporter binding"/>
    <property type="evidence" value="ECO:0000353"/>
    <property type="project" value="RGD"/>
</dbReference>
<dbReference type="GO" id="GO:0031625">
    <property type="term" value="F:ubiquitin protein ligase binding"/>
    <property type="evidence" value="ECO:0000353"/>
    <property type="project" value="RGD"/>
</dbReference>
<dbReference type="GO" id="GO:0022843">
    <property type="term" value="F:voltage-gated monoatomic cation channel activity"/>
    <property type="evidence" value="ECO:0000266"/>
    <property type="project" value="RGD"/>
</dbReference>
<dbReference type="GO" id="GO:0005244">
    <property type="term" value="F:voltage-gated monoatomic ion channel activity"/>
    <property type="evidence" value="ECO:0000266"/>
    <property type="project" value="RGD"/>
</dbReference>
<dbReference type="GO" id="GO:0005249">
    <property type="term" value="F:voltage-gated potassium channel activity"/>
    <property type="evidence" value="ECO:0000314"/>
    <property type="project" value="UniProtKB"/>
</dbReference>
<dbReference type="GO" id="GO:0001508">
    <property type="term" value="P:action potential"/>
    <property type="evidence" value="ECO:0000318"/>
    <property type="project" value="GO_Central"/>
</dbReference>
<dbReference type="GO" id="GO:0099610">
    <property type="term" value="P:action potential initiation"/>
    <property type="evidence" value="ECO:0000266"/>
    <property type="project" value="RGD"/>
</dbReference>
<dbReference type="GO" id="GO:0097314">
    <property type="term" value="P:apoptosome assembly"/>
    <property type="evidence" value="ECO:0000266"/>
    <property type="project" value="RGD"/>
</dbReference>
<dbReference type="GO" id="GO:0071242">
    <property type="term" value="P:cellular response to ammonium ion"/>
    <property type="evidence" value="ECO:0000315"/>
    <property type="project" value="RGD"/>
</dbReference>
<dbReference type="GO" id="GO:0071277">
    <property type="term" value="P:cellular response to calcium ion"/>
    <property type="evidence" value="ECO:0000266"/>
    <property type="project" value="RGD"/>
</dbReference>
<dbReference type="GO" id="GO:0071466">
    <property type="term" value="P:cellular response to xenobiotic stimulus"/>
    <property type="evidence" value="ECO:0000266"/>
    <property type="project" value="RGD"/>
</dbReference>
<dbReference type="GO" id="GO:0006897">
    <property type="term" value="P:endocytosis"/>
    <property type="evidence" value="ECO:0000266"/>
    <property type="project" value="RGD"/>
</dbReference>
<dbReference type="GO" id="GO:0051649">
    <property type="term" value="P:establishment of localization in cell"/>
    <property type="evidence" value="ECO:0000266"/>
    <property type="project" value="RGD"/>
</dbReference>
<dbReference type="GO" id="GO:0098976">
    <property type="term" value="P:excitatory chemical synaptic transmission"/>
    <property type="evidence" value="ECO:0000266"/>
    <property type="project" value="RGD"/>
</dbReference>
<dbReference type="GO" id="GO:0006887">
    <property type="term" value="P:exocytosis"/>
    <property type="evidence" value="ECO:0000266"/>
    <property type="project" value="RGD"/>
</dbReference>
<dbReference type="GO" id="GO:0061548">
    <property type="term" value="P:ganglion development"/>
    <property type="evidence" value="ECO:0000270"/>
    <property type="project" value="RGD"/>
</dbReference>
<dbReference type="GO" id="GO:0010467">
    <property type="term" value="P:gene expression"/>
    <property type="evidence" value="ECO:0000266"/>
    <property type="project" value="RGD"/>
</dbReference>
<dbReference type="GO" id="GO:0098977">
    <property type="term" value="P:inhibitory chemical synaptic transmission"/>
    <property type="evidence" value="ECO:0000266"/>
    <property type="project" value="RGD"/>
</dbReference>
<dbReference type="GO" id="GO:0060081">
    <property type="term" value="P:membrane hyperpolarization"/>
    <property type="evidence" value="ECO:0000266"/>
    <property type="project" value="RGD"/>
</dbReference>
<dbReference type="GO" id="GO:0051882">
    <property type="term" value="P:mitochondrial depolarization"/>
    <property type="evidence" value="ECO:0000266"/>
    <property type="project" value="RGD"/>
</dbReference>
<dbReference type="GO" id="GO:0034220">
    <property type="term" value="P:monoatomic ion transmembrane transport"/>
    <property type="evidence" value="ECO:0000315"/>
    <property type="project" value="RGD"/>
</dbReference>
<dbReference type="GO" id="GO:0021675">
    <property type="term" value="P:nerve development"/>
    <property type="evidence" value="ECO:0000266"/>
    <property type="project" value="RGD"/>
</dbReference>
<dbReference type="GO" id="GO:0051402">
    <property type="term" value="P:neuron apoptotic process"/>
    <property type="evidence" value="ECO:0000266"/>
    <property type="project" value="RGD"/>
</dbReference>
<dbReference type="GO" id="GO:0030182">
    <property type="term" value="P:neuron differentiation"/>
    <property type="evidence" value="ECO:0000266"/>
    <property type="project" value="RGD"/>
</dbReference>
<dbReference type="GO" id="GO:0016322">
    <property type="term" value="P:neuron remodeling"/>
    <property type="evidence" value="ECO:0000266"/>
    <property type="project" value="RGD"/>
</dbReference>
<dbReference type="GO" id="GO:0019228">
    <property type="term" value="P:neuronal action potential"/>
    <property type="evidence" value="ECO:0000266"/>
    <property type="project" value="RGD"/>
</dbReference>
<dbReference type="GO" id="GO:0014003">
    <property type="term" value="P:oligodendrocyte development"/>
    <property type="evidence" value="ECO:0000270"/>
    <property type="project" value="RGD"/>
</dbReference>
<dbReference type="GO" id="GO:0071805">
    <property type="term" value="P:potassium ion transmembrane transport"/>
    <property type="evidence" value="ECO:0000314"/>
    <property type="project" value="UniProtKB"/>
</dbReference>
<dbReference type="GO" id="GO:0006606">
    <property type="term" value="P:protein import into nucleus"/>
    <property type="evidence" value="ECO:0000266"/>
    <property type="project" value="RGD"/>
</dbReference>
<dbReference type="GO" id="GO:0006605">
    <property type="term" value="P:protein targeting"/>
    <property type="evidence" value="ECO:0000266"/>
    <property type="project" value="RGD"/>
</dbReference>
<dbReference type="GO" id="GO:0015031">
    <property type="term" value="P:protein transport"/>
    <property type="evidence" value="ECO:0000266"/>
    <property type="project" value="RGD"/>
</dbReference>
<dbReference type="GO" id="GO:0065003">
    <property type="term" value="P:protein-containing complex assembly"/>
    <property type="evidence" value="ECO:0000266"/>
    <property type="project" value="RGD"/>
</dbReference>
<dbReference type="GO" id="GO:0036343">
    <property type="term" value="P:psychomotor behavior"/>
    <property type="evidence" value="ECO:0000266"/>
    <property type="project" value="RGD"/>
</dbReference>
<dbReference type="GO" id="GO:0099611">
    <property type="term" value="P:regulation of action potential firing threshold"/>
    <property type="evidence" value="ECO:0000266"/>
    <property type="project" value="RGD"/>
</dbReference>
<dbReference type="GO" id="GO:0048167">
    <property type="term" value="P:regulation of synaptic plasticity"/>
    <property type="evidence" value="ECO:0000266"/>
    <property type="project" value="RGD"/>
</dbReference>
<dbReference type="GO" id="GO:0010996">
    <property type="term" value="P:response to auditory stimulus"/>
    <property type="evidence" value="ECO:0000266"/>
    <property type="project" value="RGD"/>
</dbReference>
<dbReference type="GO" id="GO:0009612">
    <property type="term" value="P:response to mechanical stimulus"/>
    <property type="evidence" value="ECO:0000266"/>
    <property type="project" value="RGD"/>
</dbReference>
<dbReference type="GO" id="GO:0007605">
    <property type="term" value="P:sensory perception of sound"/>
    <property type="evidence" value="ECO:0000266"/>
    <property type="project" value="RGD"/>
</dbReference>
<dbReference type="GO" id="GO:1903701">
    <property type="term" value="P:substantia propria of cornea development"/>
    <property type="evidence" value="ECO:0000266"/>
    <property type="project" value="RGD"/>
</dbReference>
<dbReference type="FunFam" id="1.20.120.350:FF:000017">
    <property type="entry name" value="potassium voltage-gated channel subfamily KQT member 1"/>
    <property type="match status" value="1"/>
</dbReference>
<dbReference type="FunFam" id="1.10.287.70:FF:000016">
    <property type="entry name" value="Putative potassium voltage-gated channel subfamily KQT member 2"/>
    <property type="match status" value="1"/>
</dbReference>
<dbReference type="Gene3D" id="1.10.287.70">
    <property type="match status" value="1"/>
</dbReference>
<dbReference type="Gene3D" id="6.10.140.1910">
    <property type="match status" value="2"/>
</dbReference>
<dbReference type="InterPro" id="IPR020969">
    <property type="entry name" value="Ankyrin-G_BS"/>
</dbReference>
<dbReference type="InterPro" id="IPR005821">
    <property type="entry name" value="Ion_trans_dom"/>
</dbReference>
<dbReference type="InterPro" id="IPR003937">
    <property type="entry name" value="K_chnl_volt-dep_KCNQ"/>
</dbReference>
<dbReference type="InterPro" id="IPR003948">
    <property type="entry name" value="K_chnl_volt-dep_KCNQ3"/>
</dbReference>
<dbReference type="InterPro" id="IPR013821">
    <property type="entry name" value="K_chnl_volt-dep_KCNQ_C"/>
</dbReference>
<dbReference type="PANTHER" id="PTHR47735:SF11">
    <property type="entry name" value="POTASSIUM VOLTAGE-GATED CHANNEL SUBFAMILY KQT MEMBER 3"/>
    <property type="match status" value="1"/>
</dbReference>
<dbReference type="PANTHER" id="PTHR47735">
    <property type="entry name" value="POTASSIUM VOLTAGE-GATED CHANNEL SUBFAMILY KQT MEMBER 4"/>
    <property type="match status" value="1"/>
</dbReference>
<dbReference type="Pfam" id="PF00520">
    <property type="entry name" value="Ion_trans"/>
    <property type="match status" value="1"/>
</dbReference>
<dbReference type="Pfam" id="PF03520">
    <property type="entry name" value="KCNQ_channel"/>
    <property type="match status" value="1"/>
</dbReference>
<dbReference type="Pfam" id="PF11956">
    <property type="entry name" value="KCNQC3-Ank-G_bd"/>
    <property type="match status" value="1"/>
</dbReference>
<dbReference type="PRINTS" id="PR00169">
    <property type="entry name" value="KCHANNEL"/>
</dbReference>
<dbReference type="PRINTS" id="PR01462">
    <property type="entry name" value="KCNQ3CHANNEL"/>
</dbReference>
<dbReference type="PRINTS" id="PR01459">
    <property type="entry name" value="KCNQCHANNEL"/>
</dbReference>
<dbReference type="SUPFAM" id="SSF81324">
    <property type="entry name" value="Voltage-gated potassium channels"/>
    <property type="match status" value="1"/>
</dbReference>
<feature type="chain" id="PRO_0000054036" description="Potassium voltage-gated channel subfamily KQT member 3">
    <location>
        <begin position="1"/>
        <end position="873"/>
    </location>
</feature>
<feature type="topological domain" description="Cytoplasmic" evidence="10">
    <location>
        <begin position="1"/>
        <end position="121"/>
    </location>
</feature>
<feature type="transmembrane region" description="Helical; Name=Segment S1" evidence="3">
    <location>
        <begin position="122"/>
        <end position="144"/>
    </location>
</feature>
<feature type="topological domain" description="Extracellular" evidence="10">
    <location>
        <begin position="145"/>
        <end position="154"/>
    </location>
</feature>
<feature type="transmembrane region" description="Helical; Name=Segment S2" evidence="3">
    <location>
        <begin position="155"/>
        <end position="176"/>
    </location>
</feature>
<feature type="topological domain" description="Cytoplasmic" evidence="10">
    <location>
        <begin position="177"/>
        <end position="194"/>
    </location>
</feature>
<feature type="transmembrane region" description="Helical; Name=Segment S3" evidence="3">
    <location>
        <begin position="195"/>
        <end position="214"/>
    </location>
</feature>
<feature type="topological domain" description="Extracellular" evidence="10">
    <location>
        <begin position="215"/>
        <end position="226"/>
    </location>
</feature>
<feature type="transmembrane region" description="Helical; Voltage-sensor; Name=Segment S4" evidence="3">
    <location>
        <begin position="227"/>
        <end position="245"/>
    </location>
</feature>
<feature type="topological domain" description="Cytoplasmic" evidence="10">
    <location>
        <begin position="246"/>
        <end position="257"/>
    </location>
</feature>
<feature type="transmembrane region" description="Helical; Name=Segment S5" evidence="3">
    <location>
        <begin position="258"/>
        <end position="283"/>
    </location>
</feature>
<feature type="topological domain" description="Extracellular" evidence="10">
    <location>
        <begin position="284"/>
        <end position="303"/>
    </location>
</feature>
<feature type="intramembrane region" description="Pore-forming; Name=Segment H5" evidence="3">
    <location>
        <begin position="304"/>
        <end position="316"/>
    </location>
</feature>
<feature type="topological domain" description="Extracellular" evidence="10">
    <location>
        <begin position="317"/>
        <end position="327"/>
    </location>
</feature>
<feature type="transmembrane region" description="Helical; Name=Segment S6" evidence="3">
    <location>
        <begin position="328"/>
        <end position="354"/>
    </location>
</feature>
<feature type="topological domain" description="Cytoplasmic" evidence="10">
    <location>
        <begin position="355"/>
        <end position="873"/>
    </location>
</feature>
<feature type="region of interest" description="Disordered" evidence="5">
    <location>
        <begin position="1"/>
        <end position="41"/>
    </location>
</feature>
<feature type="region of interest" description="Mediates interaction with calmodulin" evidence="2">
    <location>
        <begin position="357"/>
        <end position="538"/>
    </location>
</feature>
<feature type="region of interest" description="Disordered" evidence="5">
    <location>
        <begin position="575"/>
        <end position="603"/>
    </location>
</feature>
<feature type="region of interest" description="Disordered" evidence="5">
    <location>
        <begin position="723"/>
        <end position="742"/>
    </location>
</feature>
<feature type="region of interest" description="Disordered" evidence="5">
    <location>
        <begin position="766"/>
        <end position="873"/>
    </location>
</feature>
<feature type="short sequence motif" description="Selectivity filter" evidence="1">
    <location>
        <begin position="317"/>
        <end position="322"/>
    </location>
</feature>
<feature type="compositionally biased region" description="Gly residues" evidence="5">
    <location>
        <begin position="11"/>
        <end position="26"/>
    </location>
</feature>
<feature type="compositionally biased region" description="Polar residues" evidence="5">
    <location>
        <begin position="588"/>
        <end position="601"/>
    </location>
</feature>
<feature type="compositionally biased region" description="Polar residues" evidence="5">
    <location>
        <begin position="725"/>
        <end position="741"/>
    </location>
</feature>
<feature type="compositionally biased region" description="Polar residues" evidence="5">
    <location>
        <begin position="844"/>
        <end position="873"/>
    </location>
</feature>
<feature type="binding site" evidence="3">
    <location>
        <position position="244"/>
    </location>
    <ligand>
        <name>a 1,2-diacyl-sn-glycero-3-phospho-(1D-myo-inositol-4,5-bisphosphate)</name>
        <dbReference type="ChEBI" id="CHEBI:58456"/>
    </ligand>
</feature>
<feature type="binding site" evidence="3">
    <location>
        <position position="260"/>
    </location>
    <ligand>
        <name>a 1,2-diacyl-sn-glycero-3-phospho-(1D-myo-inositol-4,5-bisphosphate)</name>
        <dbReference type="ChEBI" id="CHEBI:58456"/>
    </ligand>
</feature>
<feature type="binding site" evidence="3">
    <location>
        <position position="367"/>
    </location>
    <ligand>
        <name>a 1,2-diacyl-sn-glycero-3-phospho-(1D-myo-inositol-4,5-bisphosphate)</name>
        <dbReference type="ChEBI" id="CHEBI:58456"/>
    </ligand>
</feature>
<feature type="modified residue" description="Phosphothreonine" evidence="12">
    <location>
        <position position="82"/>
    </location>
</feature>
<feature type="splice variant" id="VSP_001012" description="In isoform 2." evidence="9">
    <original>MGLKARRAAGAAGGGGGEGGGGGGGAANPAGGDSAVAGDEERKVGLAPGDVEQVTLALGTGADKDGTLLLEGGGREEGQRRTP</original>
    <variation>MALEFPGLQPPPPPRPRTPSAPSSRSSSGEGEAPSGGEADGAQGS</variation>
    <location>
        <begin position="1"/>
        <end position="83"/>
    </location>
</feature>
<feature type="sequence conflict" description="In Ref. 2; AAC79846." evidence="10" ref="2">
    <original>H</original>
    <variation>R</variation>
    <location>
        <position position="654"/>
    </location>
</feature>
<name>KCNQ3_RAT</name>
<proteinExistence type="evidence at protein level"/>
<comment type="function">
    <text evidence="2 3 6 8">Pore-forming subunit of the voltage-gated potassium (Kv) M-channel which is responsible for the M-current, a key controller of neuronal excitability (PubMed:24349250, PubMed:9836639). M-channel is composed of pore-forming subunits KCNQ2 and KCNQ3 assembled as heterotetramers, each subunit containing a voltage sensing domain (VSD) and a pore-forming domain (PD) (By similarity). The native M-current has a slowly activating and deactivating potassium conductance which plays a critical role in determining the subthreshold electrical excitability of neurons as well as the responsiveness to synaptic inputs (PubMed:9836639). M-channel is selectively permeable in vitro to other cations besides potassium, in decreasing order of affinity K(+) &gt; Rb(+) &gt; Cs(+) &gt; Na(+). M-channel association with SLC5A3/SMIT1 alters channel ion selectivity, increasing Na(+) and Cs(+) permeation relative to K(+). Suppressed by activation of M1 muscarinic acetylcholine receptors. KCNQ3 also associates with KCNQ5 to form a functional channel in vitro and may also contribute to the M-current in brain (By similarity).</text>
</comment>
<comment type="catalytic activity">
    <reaction evidence="2">
        <text>K(+)(in) = K(+)(out)</text>
        <dbReference type="Rhea" id="RHEA:29463"/>
        <dbReference type="ChEBI" id="CHEBI:29103"/>
    </reaction>
</comment>
<comment type="catalytic activity">
    <reaction evidence="2">
        <text>Rb(+)(in) = Rb(+)(out)</text>
        <dbReference type="Rhea" id="RHEA:78547"/>
        <dbReference type="ChEBI" id="CHEBI:49847"/>
    </reaction>
</comment>
<comment type="catalytic activity">
    <reaction evidence="2">
        <text>Cs(+)(in) = Cs(+)(out)</text>
        <dbReference type="Rhea" id="RHEA:78555"/>
        <dbReference type="ChEBI" id="CHEBI:49547"/>
    </reaction>
</comment>
<comment type="catalytic activity">
    <reaction evidence="2">
        <text>Na(+)(in) = Na(+)(out)</text>
        <dbReference type="Rhea" id="RHEA:34963"/>
        <dbReference type="ChEBI" id="CHEBI:29101"/>
    </reaction>
</comment>
<comment type="activity regulation">
    <text evidence="3 6 8">Phosphatidylinositol-4,5-bisphosphate (PIP2) potentiates the activation of KCNQ channels by enhancing the electro-mechanical coupling of the voltage-sensing domain (VSD) and the pore-forming domain (PD). In the closed state of the channel, PIP2 is anchored at the S2-S3 loop; upon channel activation, PIP2 interacts with the S4-S5 linker and is involved in channel gating (By similarity). Calcium suppresses KCNQ2-KCNQ3 channel currents, with calcium-bound calmodulin inducing a change in channel configuration which leads to the reduction of channel affinity for PIP2 and subsequent current suppression (PubMed:24349250). M-channel is blocked by XE991 (PubMed:9836639).</text>
</comment>
<comment type="subunit">
    <text evidence="2 6 7 8">Heterotetramer with KCNQ2; forms heterotetrameric M-channel responsible for the native M-current (PubMed:9836639). Interacts with calmodulin; the interaction is calcium-independent, constitutive and participates in the proper assembly of a functional M-channel (PubMed:24349250). Heteromultimer with KCNQ5 (By similarity). May associate with KCNE2 (By similarity). Interacts with IQCJ-SCHIP1 (PubMed:27979964). Interacts (via the pore module) with SLC5A3/SMIT1; forms a coregulatory complex that alters ion selectivity, voltage dependence and gating kinetics of the channel (By similarity).</text>
</comment>
<comment type="subcellular location">
    <subcellularLocation>
        <location evidence="8">Cell membrane</location>
        <topology evidence="4">Multi-pass membrane protein</topology>
    </subcellularLocation>
</comment>
<comment type="alternative products">
    <event type="alternative splicing"/>
    <isoform>
        <id>O88944-1</id>
        <name>1</name>
        <sequence type="displayed"/>
    </isoform>
    <isoform>
        <id>O88944-2</id>
        <name>2</name>
        <sequence type="described" ref="VSP_001012"/>
    </isoform>
</comment>
<comment type="tissue specificity">
    <text>Expressed in brain and sympathetic ganglia. In brain, expressed in cortex, hippocampus and at much lower levels in cerebellum. In sympathetic ganglia, expressed at approximately equal levels in both superior cervical ganglia and prevertebral ganglia.</text>
</comment>
<comment type="domain">
    <text evidence="3">Each subunit contains six transmembrane segments (S1-S6) with S1-S4 forming one voltage sensing domain (VSD) and S5-S6 contributing to form one quarter of an interlocking pore-forming domain (PD).</text>
</comment>
<comment type="domain">
    <text evidence="3">The S4-S5 linker preferentially interacts with PIP2 in the open-state KCNQ2 channel, whereas the S2-S3 loop interacts with PIP2 in the closed state.</text>
</comment>
<comment type="domain">
    <text evidence="2">The intracellular C-terminal domain is bound constitutively by calmodulin (CaM). This domain plays key functions in channel tetramerization, trafficking, and gating.</text>
</comment>
<comment type="PTM">
    <text evidence="2">KCNQ2/KCNQ3 are ubiquitinated by NEDD4L. Ubiquitination leads to protein degradation. Degradation induced by NEDD4L is inhibited by USP36.</text>
</comment>
<comment type="similarity">
    <text evidence="10">Belongs to the potassium channel family. KQT (TC 1.A.1.15) subfamily. Kv7.3/KCNQ3 sub-subfamily.</text>
</comment>
<reference key="1">
    <citation type="submission" date="2001-09" db="EMBL/GenBank/DDBJ databases">
        <authorList>
            <person name="Derst C."/>
            <person name="Preisig-Mueller R."/>
            <person name="Hennighausen A."/>
            <person name="Daut J."/>
        </authorList>
    </citation>
    <scope>NUCLEOTIDE SEQUENCE [MRNA] (ISOFORM 1)</scope>
    <source>
        <tissue>Brain</tissue>
    </source>
</reference>
<reference key="2">
    <citation type="journal article" date="1998" name="Science">
        <title>KCNQ2 and KCNQ3 potassium channel subunits: molecular correlates of the M-channel.</title>
        <authorList>
            <person name="Wang H.-S."/>
            <person name="Pan Z."/>
            <person name="Shi W."/>
            <person name="Brown B.S."/>
            <person name="Wymore R.S."/>
            <person name="Cohen I.S."/>
            <person name="Dixon J.E."/>
            <person name="McKinnon D."/>
        </authorList>
    </citation>
    <scope>NUCLEOTIDE SEQUENCE [MRNA] (ISOFORM 2)</scope>
    <scope>FUNCTION</scope>
    <scope>SUBCELLULAR LOCATION</scope>
    <source>
        <tissue>Brain</tissue>
    </source>
</reference>
<reference key="3">
    <citation type="journal article" date="2000" name="J. Neurosci.">
        <title>Reconstitution of muscarinic modulation of the KCNQ2/KCNQ3 K(+) channels that underlie the neuronal M current.</title>
        <authorList>
            <person name="Shapiro M.S."/>
            <person name="Roche J.P."/>
            <person name="Kaftan E.J."/>
            <person name="Cruzblanca H."/>
            <person name="Mackie K."/>
            <person name="Hille B."/>
        </authorList>
    </citation>
    <scope>INHIBITION BY M1 MUSCARINIC RECEPTOR</scope>
</reference>
<reference key="4">
    <citation type="journal article" date="2012" name="Nat. Commun.">
        <title>Quantitative maps of protein phosphorylation sites across 14 different rat organs and tissues.</title>
        <authorList>
            <person name="Lundby A."/>
            <person name="Secher A."/>
            <person name="Lage K."/>
            <person name="Nordsborg N.B."/>
            <person name="Dmytriyev A."/>
            <person name="Lundby C."/>
            <person name="Olsen J.V."/>
        </authorList>
    </citation>
    <scope>PHOSPHORYLATION [LARGE SCALE ANALYSIS] AT THR-82</scope>
    <scope>IDENTIFICATION BY MASS SPECTROMETRY [LARGE SCALE ANALYSIS]</scope>
</reference>
<reference key="5">
    <citation type="journal article" date="2013" name="PLoS ONE">
        <title>A change in configuration of the calmodulin-KCNQ channel complex underlies Ca2+-dependent modulation of KCNQ channel activity.</title>
        <authorList>
            <person name="Kosenko A."/>
            <person name="Hoshi N."/>
        </authorList>
    </citation>
    <scope>FUNCTION</scope>
    <scope>ACTIVITY REGULATION</scope>
    <scope>INTERACTION WITH CALMODULIN</scope>
</reference>
<reference key="6">
    <citation type="journal article" date="2017" name="J. Biol. Chem.">
        <title>Schwannomin-interacting protein 1 isoform IQCJ-SCHIP1 is a multipartner ankyrin- and spectrin-binding protein involved in the organization of nodes of Ranvier.</title>
        <authorList>
            <person name="Martin P.M."/>
            <person name="Cifuentes-Diaz C."/>
            <person name="Devaux J."/>
            <person name="Garcia M."/>
            <person name="Bureau J."/>
            <person name="Thomasseau S."/>
            <person name="Klingler E."/>
            <person name="Girault J.A."/>
            <person name="Goutebroze L."/>
        </authorList>
    </citation>
    <scope>INTERACTION WITH IQCJ-SCHIP1</scope>
</reference>
<evidence type="ECO:0000250" key="1"/>
<evidence type="ECO:0000250" key="2">
    <source>
        <dbReference type="UniProtKB" id="O43525"/>
    </source>
</evidence>
<evidence type="ECO:0000250" key="3">
    <source>
        <dbReference type="UniProtKB" id="O43526"/>
    </source>
</evidence>
<evidence type="ECO:0000255" key="4"/>
<evidence type="ECO:0000256" key="5">
    <source>
        <dbReference type="SAM" id="MobiDB-lite"/>
    </source>
</evidence>
<evidence type="ECO:0000269" key="6">
    <source>
    </source>
</evidence>
<evidence type="ECO:0000269" key="7">
    <source>
    </source>
</evidence>
<evidence type="ECO:0000269" key="8">
    <source>
    </source>
</evidence>
<evidence type="ECO:0000303" key="9">
    <source>
    </source>
</evidence>
<evidence type="ECO:0000305" key="10"/>
<evidence type="ECO:0000312" key="11">
    <source>
        <dbReference type="RGD" id="69222"/>
    </source>
</evidence>
<evidence type="ECO:0007744" key="12">
    <source>
    </source>
</evidence>
<gene>
    <name evidence="11" type="primary">Kcnq3</name>
</gene>
<protein>
    <recommendedName>
        <fullName evidence="10">Potassium voltage-gated channel subfamily KQT member 3</fullName>
    </recommendedName>
    <alternativeName>
        <fullName>KQT-like 3</fullName>
    </alternativeName>
    <alternativeName>
        <fullName>Potassium channel subunit alpha KvLQT3</fullName>
    </alternativeName>
    <alternativeName>
        <fullName>Voltage-gated potassium channel subunit Kv7.3</fullName>
    </alternativeName>
</protein>
<sequence length="873" mass="96898">MGLKARRAAGAAGGGGGEGGGGGGGAANPAGGDSAVAGDEERKVGLAPGDVEQVTLALGTGADKDGTLLLEGGGREEGQRRTPQGIGLLAKTPLSRPVKRNNAKYRRIQTLIYDALERPRGWALLYHALVFLIVLGCLILAVLTTFKEYETVSGDWLLLLETFAIFIFGAEFALRIWAAGCCCRYKGWRGRLKFARKPLCMLDIFVLIASVPVVAVGNQGNVLATSLRSLRFLQILRMLRMDRRGGTWKLLGSAICAHSKELITAWYIGFLTLILSSFLVYLVEKDVPEMDAQGEEMKEEFETYADALWWGLITLATIGYGDKTPKTWEGRLIAATFSLIGVSFFALPAGILGSGLALKVQEQHRQKHFEKRRKPAAELIQAAWRYYATNPNRLDLVATWRFYESVVSFPFFRKEQLEAAASQKLGLLDRVRLSNPRGSNTKGKLFTPLNVDAIEESPSKEPKPVGLNNKERFRTAFRMKAYAFWQSSEDAGTGDPMTEDRGYGNDFLIEDMIPTLKAAIRAVRILQFRLYKKKFKETLRPYDVKDVIEQYSAGHLDMLSRIKYLQTRIDMIFTPGPPSTPKHKKSQKGSAFTYPSQQSPRNEPYVARAATSETEDQSMMGKFVKVERQVHDMGKKLDFLVDMHMQHMERLQVHVTEYYPTKGASSPAEGEKKEDNRYSDLKTIICNYSESGPPDPPYSFHQVPIDRVGPYGFFAHDPVKLTRGGPSSTKAQANLPSSGSTYAERPTVLPILTLLDSCVSYHSQTELQGPYSDHISPRQRRSITRDSDTPLSLMSVNHEELERSPSGFSISQDRDDYVFGPSGGSSWMREKRYLAEGETDTDTDPFTPSGSMPMSSTGDGISDSIWTPSNKPT</sequence>
<keyword id="KW-0025">Alternative splicing</keyword>
<keyword id="KW-1003">Cell membrane</keyword>
<keyword id="KW-0407">Ion channel</keyword>
<keyword id="KW-0406">Ion transport</keyword>
<keyword id="KW-0472">Membrane</keyword>
<keyword id="KW-0597">Phosphoprotein</keyword>
<keyword id="KW-0630">Potassium</keyword>
<keyword id="KW-0631">Potassium channel</keyword>
<keyword id="KW-0633">Potassium transport</keyword>
<keyword id="KW-1185">Reference proteome</keyword>
<keyword id="KW-0812">Transmembrane</keyword>
<keyword id="KW-1133">Transmembrane helix</keyword>
<keyword id="KW-0813">Transport</keyword>
<keyword id="KW-0832">Ubl conjugation</keyword>
<keyword id="KW-0851">Voltage-gated channel</keyword>